<name>KDSD_SALTI</name>
<comment type="function">
    <text evidence="1">Involved in the biosynthesis of 3-deoxy-D-manno-octulosonate (KDO), a unique 8-carbon sugar component of lipopolysaccharides (LPSs). Catalyzes the reversible aldol-ketol isomerization between D-ribulose 5-phosphate (Ru5P) and D-arabinose 5-phosphate (A5P) (By similarity).</text>
</comment>
<comment type="catalytic activity">
    <reaction>
        <text>D-arabinose 5-phosphate = D-ribulose 5-phosphate</text>
        <dbReference type="Rhea" id="RHEA:23104"/>
        <dbReference type="ChEBI" id="CHEBI:57693"/>
        <dbReference type="ChEBI" id="CHEBI:58121"/>
        <dbReference type="EC" id="5.3.1.13"/>
    </reaction>
</comment>
<comment type="pathway">
    <text>Carbohydrate biosynthesis; 3-deoxy-D-manno-octulosonate biosynthesis; 3-deoxy-D-manno-octulosonate from D-ribulose 5-phosphate: step 1/3.</text>
</comment>
<comment type="pathway">
    <text>Bacterial outer membrane biogenesis; lipopolysaccharide biosynthesis.</text>
</comment>
<comment type="subunit">
    <text evidence="1">Homotetramer.</text>
</comment>
<comment type="similarity">
    <text evidence="4">Belongs to the SIS family. GutQ/KpsF subfamily.</text>
</comment>
<reference key="1">
    <citation type="journal article" date="2001" name="Nature">
        <title>Complete genome sequence of a multiple drug resistant Salmonella enterica serovar Typhi CT18.</title>
        <authorList>
            <person name="Parkhill J."/>
            <person name="Dougan G."/>
            <person name="James K.D."/>
            <person name="Thomson N.R."/>
            <person name="Pickard D."/>
            <person name="Wain J."/>
            <person name="Churcher C.M."/>
            <person name="Mungall K.L."/>
            <person name="Bentley S.D."/>
            <person name="Holden M.T.G."/>
            <person name="Sebaihia M."/>
            <person name="Baker S."/>
            <person name="Basham D."/>
            <person name="Brooks K."/>
            <person name="Chillingworth T."/>
            <person name="Connerton P."/>
            <person name="Cronin A."/>
            <person name="Davis P."/>
            <person name="Davies R.M."/>
            <person name="Dowd L."/>
            <person name="White N."/>
            <person name="Farrar J."/>
            <person name="Feltwell T."/>
            <person name="Hamlin N."/>
            <person name="Haque A."/>
            <person name="Hien T.T."/>
            <person name="Holroyd S."/>
            <person name="Jagels K."/>
            <person name="Krogh A."/>
            <person name="Larsen T.S."/>
            <person name="Leather S."/>
            <person name="Moule S."/>
            <person name="O'Gaora P."/>
            <person name="Parry C."/>
            <person name="Quail M.A."/>
            <person name="Rutherford K.M."/>
            <person name="Simmonds M."/>
            <person name="Skelton J."/>
            <person name="Stevens K."/>
            <person name="Whitehead S."/>
            <person name="Barrell B.G."/>
        </authorList>
    </citation>
    <scope>NUCLEOTIDE SEQUENCE [LARGE SCALE GENOMIC DNA]</scope>
    <source>
        <strain>CT18</strain>
    </source>
</reference>
<reference key="2">
    <citation type="journal article" date="2003" name="J. Bacteriol.">
        <title>Comparative genomics of Salmonella enterica serovar Typhi strains Ty2 and CT18.</title>
        <authorList>
            <person name="Deng W."/>
            <person name="Liou S.-R."/>
            <person name="Plunkett G. III"/>
            <person name="Mayhew G.F."/>
            <person name="Rose D.J."/>
            <person name="Burland V."/>
            <person name="Kodoyianni V."/>
            <person name="Schwartz D.C."/>
            <person name="Blattner F.R."/>
        </authorList>
    </citation>
    <scope>NUCLEOTIDE SEQUENCE [LARGE SCALE GENOMIC DNA]</scope>
    <source>
        <strain>ATCC 700931 / Ty2</strain>
    </source>
</reference>
<protein>
    <recommendedName>
        <fullName>Arabinose 5-phosphate isomerase KdsD</fullName>
        <shortName>API</shortName>
        <shortName>L-API</shortName>
        <ecNumber>5.3.1.13</ecNumber>
    </recommendedName>
</protein>
<proteinExistence type="inferred from homology"/>
<keyword id="KW-0119">Carbohydrate metabolism</keyword>
<keyword id="KW-0129">CBS domain</keyword>
<keyword id="KW-0413">Isomerase</keyword>
<keyword id="KW-0448">Lipopolysaccharide biosynthesis</keyword>
<keyword id="KW-0479">Metal-binding</keyword>
<keyword id="KW-0677">Repeat</keyword>
<keyword id="KW-0862">Zinc</keyword>
<evidence type="ECO:0000250" key="1"/>
<evidence type="ECO:0000255" key="2">
    <source>
        <dbReference type="PROSITE-ProRule" id="PRU00703"/>
    </source>
</evidence>
<evidence type="ECO:0000255" key="3">
    <source>
        <dbReference type="PROSITE-ProRule" id="PRU00797"/>
    </source>
</evidence>
<evidence type="ECO:0000305" key="4"/>
<accession>Q8Z3G6</accession>
<dbReference type="EC" id="5.3.1.13"/>
<dbReference type="EMBL" id="AL513382">
    <property type="protein sequence ID" value="CAD07832.1"/>
    <property type="molecule type" value="Genomic_DNA"/>
</dbReference>
<dbReference type="EMBL" id="AE014613">
    <property type="protein sequence ID" value="AAO70768.1"/>
    <property type="molecule type" value="Genomic_DNA"/>
</dbReference>
<dbReference type="RefSeq" id="NP_457694.1">
    <property type="nucleotide sequence ID" value="NC_003198.1"/>
</dbReference>
<dbReference type="RefSeq" id="WP_000018616.1">
    <property type="nucleotide sequence ID" value="NZ_WSUR01000003.1"/>
</dbReference>
<dbReference type="SMR" id="Q8Z3G6"/>
<dbReference type="STRING" id="220341.gene:17587345"/>
<dbReference type="KEGG" id="stt:t3232"/>
<dbReference type="KEGG" id="sty:STY3494"/>
<dbReference type="PATRIC" id="fig|220341.7.peg.3558"/>
<dbReference type="eggNOG" id="COG0517">
    <property type="taxonomic scope" value="Bacteria"/>
</dbReference>
<dbReference type="eggNOG" id="COG0794">
    <property type="taxonomic scope" value="Bacteria"/>
</dbReference>
<dbReference type="HOGENOM" id="CLU_040681_13_1_6"/>
<dbReference type="OMA" id="LMACLMR"/>
<dbReference type="OrthoDB" id="9762536at2"/>
<dbReference type="UniPathway" id="UPA00030"/>
<dbReference type="UniPathway" id="UPA00357">
    <property type="reaction ID" value="UER00473"/>
</dbReference>
<dbReference type="Proteomes" id="UP000000541">
    <property type="component" value="Chromosome"/>
</dbReference>
<dbReference type="Proteomes" id="UP000002670">
    <property type="component" value="Chromosome"/>
</dbReference>
<dbReference type="GO" id="GO:0019146">
    <property type="term" value="F:arabinose-5-phosphate isomerase activity"/>
    <property type="evidence" value="ECO:0007669"/>
    <property type="project" value="UniProtKB-EC"/>
</dbReference>
<dbReference type="GO" id="GO:0097367">
    <property type="term" value="F:carbohydrate derivative binding"/>
    <property type="evidence" value="ECO:0007669"/>
    <property type="project" value="InterPro"/>
</dbReference>
<dbReference type="GO" id="GO:0046872">
    <property type="term" value="F:metal ion binding"/>
    <property type="evidence" value="ECO:0007669"/>
    <property type="project" value="UniProtKB-KW"/>
</dbReference>
<dbReference type="GO" id="GO:0009103">
    <property type="term" value="P:lipopolysaccharide biosynthetic process"/>
    <property type="evidence" value="ECO:0007669"/>
    <property type="project" value="UniProtKB-UniPathway"/>
</dbReference>
<dbReference type="CDD" id="cd04604">
    <property type="entry name" value="CBS_pair_SIS_assoc"/>
    <property type="match status" value="1"/>
</dbReference>
<dbReference type="CDD" id="cd05014">
    <property type="entry name" value="SIS_Kpsf"/>
    <property type="match status" value="1"/>
</dbReference>
<dbReference type="FunFam" id="3.10.580.10:FF:000007">
    <property type="entry name" value="Arabinose 5-phosphate isomerase"/>
    <property type="match status" value="1"/>
</dbReference>
<dbReference type="FunFam" id="3.40.50.10490:FF:000011">
    <property type="entry name" value="Arabinose 5-phosphate isomerase"/>
    <property type="match status" value="1"/>
</dbReference>
<dbReference type="Gene3D" id="3.10.580.10">
    <property type="entry name" value="CBS-domain"/>
    <property type="match status" value="1"/>
</dbReference>
<dbReference type="Gene3D" id="3.40.50.10490">
    <property type="entry name" value="Glucose-6-phosphate isomerase like protein, domain 1"/>
    <property type="match status" value="1"/>
</dbReference>
<dbReference type="InterPro" id="IPR000644">
    <property type="entry name" value="CBS_dom"/>
</dbReference>
<dbReference type="InterPro" id="IPR046342">
    <property type="entry name" value="CBS_dom_sf"/>
</dbReference>
<dbReference type="InterPro" id="IPR050986">
    <property type="entry name" value="GutQ/KpsF_isomerases"/>
</dbReference>
<dbReference type="InterPro" id="IPR004800">
    <property type="entry name" value="KdsD/KpsF-type"/>
</dbReference>
<dbReference type="InterPro" id="IPR001347">
    <property type="entry name" value="SIS_dom"/>
</dbReference>
<dbReference type="InterPro" id="IPR046348">
    <property type="entry name" value="SIS_dom_sf"/>
</dbReference>
<dbReference type="InterPro" id="IPR035474">
    <property type="entry name" value="SIS_Kpsf"/>
</dbReference>
<dbReference type="NCBIfam" id="TIGR00393">
    <property type="entry name" value="kpsF"/>
    <property type="match status" value="1"/>
</dbReference>
<dbReference type="NCBIfam" id="NF008141">
    <property type="entry name" value="PRK10892.1"/>
    <property type="match status" value="1"/>
</dbReference>
<dbReference type="PANTHER" id="PTHR42745">
    <property type="match status" value="1"/>
</dbReference>
<dbReference type="PANTHER" id="PTHR42745:SF1">
    <property type="entry name" value="ARABINOSE 5-PHOSPHATE ISOMERASE KDSD"/>
    <property type="match status" value="1"/>
</dbReference>
<dbReference type="Pfam" id="PF00571">
    <property type="entry name" value="CBS"/>
    <property type="match status" value="2"/>
</dbReference>
<dbReference type="Pfam" id="PF01380">
    <property type="entry name" value="SIS"/>
    <property type="match status" value="1"/>
</dbReference>
<dbReference type="PIRSF" id="PIRSF004692">
    <property type="entry name" value="KdsD_KpsF"/>
    <property type="match status" value="1"/>
</dbReference>
<dbReference type="SUPFAM" id="SSF53697">
    <property type="entry name" value="SIS domain"/>
    <property type="match status" value="1"/>
</dbReference>
<dbReference type="PROSITE" id="PS51371">
    <property type="entry name" value="CBS"/>
    <property type="match status" value="2"/>
</dbReference>
<dbReference type="PROSITE" id="PS51464">
    <property type="entry name" value="SIS"/>
    <property type="match status" value="1"/>
</dbReference>
<sequence length="328" mass="35032">MSHLALQPGFDFQQAGKEVLEIEREGLAELDQYINQHFTLACEKMFNCTGKVVVMGMGKSGHIGRKMAATFASTGTSSFFVHPGEAAHGDLGMVTPQDVVIAISNSGESSEIAALIPVLKRLHVPLICITGRPESSMARAADVHLCVKVPKEACPLGLAPTSSTTATLVMGDALAVALLKARGFTAEDFALSHPGGALGRKLLLRVSDIMHTGDEIPHVNKHATLRDALLEITRKNLGMTVICDESMKIDGIFTDGDLRRMFDMGGDMRQLGIAEVMTPGGIRVRPGILAVDALNLMQSRHITSVLVADGDQLLGVLHMHDLLRAGVV</sequence>
<organism>
    <name type="scientific">Salmonella typhi</name>
    <dbReference type="NCBI Taxonomy" id="90370"/>
    <lineage>
        <taxon>Bacteria</taxon>
        <taxon>Pseudomonadati</taxon>
        <taxon>Pseudomonadota</taxon>
        <taxon>Gammaproteobacteria</taxon>
        <taxon>Enterobacterales</taxon>
        <taxon>Enterobacteriaceae</taxon>
        <taxon>Salmonella</taxon>
    </lineage>
</organism>
<gene>
    <name type="primary">kdsD</name>
    <name type="ordered locus">STY3494</name>
    <name type="ordered locus">t3232</name>
</gene>
<feature type="chain" id="PRO_0000136578" description="Arabinose 5-phosphate isomerase KdsD">
    <location>
        <begin position="1"/>
        <end position="328"/>
    </location>
</feature>
<feature type="domain" description="SIS" evidence="3">
    <location>
        <begin position="41"/>
        <end position="184"/>
    </location>
</feature>
<feature type="domain" description="CBS 1" evidence="2">
    <location>
        <begin position="210"/>
        <end position="268"/>
    </location>
</feature>
<feature type="domain" description="CBS 2" evidence="2">
    <location>
        <begin position="277"/>
        <end position="328"/>
    </location>
</feature>
<feature type="binding site" evidence="1">
    <location>
        <begin position="75"/>
        <end position="76"/>
    </location>
    <ligand>
        <name>substrate</name>
    </ligand>
</feature>
<feature type="binding site" evidence="1">
    <location>
        <position position="82"/>
    </location>
    <ligand>
        <name>substrate</name>
    </ligand>
</feature>
<feature type="binding site" evidence="1">
    <location>
        <position position="82"/>
    </location>
    <ligand>
        <name>Zn(2+)</name>
        <dbReference type="ChEBI" id="CHEBI:29105"/>
    </ligand>
</feature>
<feature type="binding site" evidence="1">
    <location>
        <position position="88"/>
    </location>
    <ligand>
        <name>substrate</name>
    </ligand>
</feature>
<feature type="binding site" evidence="1">
    <location>
        <begin position="114"/>
        <end position="123"/>
    </location>
    <ligand>
        <name>substrate</name>
    </ligand>
</feature>
<feature type="binding site" evidence="1">
    <location>
        <begin position="148"/>
        <end position="150"/>
    </location>
    <ligand>
        <name>substrate</name>
    </ligand>
</feature>
<feature type="binding site" evidence="1">
    <location>
        <position position="275"/>
    </location>
    <ligand>
        <name>substrate</name>
    </ligand>
</feature>
<feature type="site" description="Catalytically relevant" evidence="1">
    <location>
        <position position="59"/>
    </location>
</feature>
<feature type="site" description="Catalytically relevant" evidence="1">
    <location>
        <position position="111"/>
    </location>
</feature>
<feature type="site" description="Catalytically relevant" evidence="1">
    <location>
        <position position="152"/>
    </location>
</feature>
<feature type="site" description="Catalytically relevant" evidence="1">
    <location>
        <position position="193"/>
    </location>
</feature>